<evidence type="ECO:0000255" key="1">
    <source>
        <dbReference type="HAMAP-Rule" id="MF_01365"/>
    </source>
</evidence>
<evidence type="ECO:0000256" key="2">
    <source>
        <dbReference type="SAM" id="MobiDB-lite"/>
    </source>
</evidence>
<evidence type="ECO:0000305" key="3"/>
<feature type="chain" id="PRO_1000214930" description="Large ribosomal subunit protein uL6">
    <location>
        <begin position="1"/>
        <end position="178"/>
    </location>
</feature>
<feature type="region of interest" description="Disordered" evidence="2">
    <location>
        <begin position="159"/>
        <end position="178"/>
    </location>
</feature>
<sequence length="178" mass="19386">MSRIGKKTIVIPAGVTVTLNGSTATVKGPKGELVKEFNPEITINIEGNEINVSRPTDNKNHRALHGTTRAILNNMVVGVSEGYEKKLELIGVGYRAQKQGDKLVLNVGYSHPVEFVAPKGVDIEVPANTQVIVKGYNKEHVGELAANIRAVRPPEPYKGKGIRYEGEHVRRKEGKTGK</sequence>
<name>RL6_LISMC</name>
<gene>
    <name evidence="1" type="primary">rplF</name>
    <name type="ordered locus">Lm4b_02584</name>
</gene>
<keyword id="KW-0687">Ribonucleoprotein</keyword>
<keyword id="KW-0689">Ribosomal protein</keyword>
<keyword id="KW-0694">RNA-binding</keyword>
<keyword id="KW-0699">rRNA-binding</keyword>
<proteinExistence type="inferred from homology"/>
<dbReference type="EMBL" id="FM242711">
    <property type="protein sequence ID" value="CAS06338.1"/>
    <property type="molecule type" value="Genomic_DNA"/>
</dbReference>
<dbReference type="RefSeq" id="WP_003726442.1">
    <property type="nucleotide sequence ID" value="NC_012488.1"/>
</dbReference>
<dbReference type="SMR" id="C1KZG5"/>
<dbReference type="KEGG" id="lmc:Lm4b_02584"/>
<dbReference type="HOGENOM" id="CLU_065464_1_2_9"/>
<dbReference type="GO" id="GO:0022625">
    <property type="term" value="C:cytosolic large ribosomal subunit"/>
    <property type="evidence" value="ECO:0007669"/>
    <property type="project" value="TreeGrafter"/>
</dbReference>
<dbReference type="GO" id="GO:0019843">
    <property type="term" value="F:rRNA binding"/>
    <property type="evidence" value="ECO:0007669"/>
    <property type="project" value="UniProtKB-UniRule"/>
</dbReference>
<dbReference type="GO" id="GO:0003735">
    <property type="term" value="F:structural constituent of ribosome"/>
    <property type="evidence" value="ECO:0007669"/>
    <property type="project" value="InterPro"/>
</dbReference>
<dbReference type="GO" id="GO:0002181">
    <property type="term" value="P:cytoplasmic translation"/>
    <property type="evidence" value="ECO:0007669"/>
    <property type="project" value="TreeGrafter"/>
</dbReference>
<dbReference type="FunFam" id="3.90.930.12:FF:000001">
    <property type="entry name" value="50S ribosomal protein L6"/>
    <property type="match status" value="1"/>
</dbReference>
<dbReference type="FunFam" id="3.90.930.12:FF:000002">
    <property type="entry name" value="50S ribosomal protein L6"/>
    <property type="match status" value="1"/>
</dbReference>
<dbReference type="Gene3D" id="3.90.930.12">
    <property type="entry name" value="Ribosomal protein L6, alpha-beta domain"/>
    <property type="match status" value="2"/>
</dbReference>
<dbReference type="HAMAP" id="MF_01365_B">
    <property type="entry name" value="Ribosomal_uL6_B"/>
    <property type="match status" value="1"/>
</dbReference>
<dbReference type="InterPro" id="IPR000702">
    <property type="entry name" value="Ribosomal_uL6-like"/>
</dbReference>
<dbReference type="InterPro" id="IPR036789">
    <property type="entry name" value="Ribosomal_uL6-like_a/b-dom_sf"/>
</dbReference>
<dbReference type="InterPro" id="IPR020040">
    <property type="entry name" value="Ribosomal_uL6_a/b-dom"/>
</dbReference>
<dbReference type="InterPro" id="IPR019906">
    <property type="entry name" value="Ribosomal_uL6_bac-type"/>
</dbReference>
<dbReference type="InterPro" id="IPR002358">
    <property type="entry name" value="Ribosomal_uL6_CS"/>
</dbReference>
<dbReference type="NCBIfam" id="TIGR03654">
    <property type="entry name" value="L6_bact"/>
    <property type="match status" value="1"/>
</dbReference>
<dbReference type="PANTHER" id="PTHR11655">
    <property type="entry name" value="60S/50S RIBOSOMAL PROTEIN L6/L9"/>
    <property type="match status" value="1"/>
</dbReference>
<dbReference type="PANTHER" id="PTHR11655:SF14">
    <property type="entry name" value="LARGE RIBOSOMAL SUBUNIT PROTEIN UL6M"/>
    <property type="match status" value="1"/>
</dbReference>
<dbReference type="Pfam" id="PF00347">
    <property type="entry name" value="Ribosomal_L6"/>
    <property type="match status" value="2"/>
</dbReference>
<dbReference type="PIRSF" id="PIRSF002162">
    <property type="entry name" value="Ribosomal_L6"/>
    <property type="match status" value="1"/>
</dbReference>
<dbReference type="PRINTS" id="PR00059">
    <property type="entry name" value="RIBOSOMALL6"/>
</dbReference>
<dbReference type="SUPFAM" id="SSF56053">
    <property type="entry name" value="Ribosomal protein L6"/>
    <property type="match status" value="2"/>
</dbReference>
<dbReference type="PROSITE" id="PS00525">
    <property type="entry name" value="RIBOSOMAL_L6_1"/>
    <property type="match status" value="1"/>
</dbReference>
<protein>
    <recommendedName>
        <fullName evidence="1">Large ribosomal subunit protein uL6</fullName>
    </recommendedName>
    <alternativeName>
        <fullName evidence="3">50S ribosomal protein L6</fullName>
    </alternativeName>
</protein>
<organism>
    <name type="scientific">Listeria monocytogenes serotype 4b (strain CLIP80459)</name>
    <dbReference type="NCBI Taxonomy" id="568819"/>
    <lineage>
        <taxon>Bacteria</taxon>
        <taxon>Bacillati</taxon>
        <taxon>Bacillota</taxon>
        <taxon>Bacilli</taxon>
        <taxon>Bacillales</taxon>
        <taxon>Listeriaceae</taxon>
        <taxon>Listeria</taxon>
    </lineage>
</organism>
<comment type="function">
    <text evidence="1">This protein binds to the 23S rRNA, and is important in its secondary structure. It is located near the subunit interface in the base of the L7/L12 stalk, and near the tRNA binding site of the peptidyltransferase center.</text>
</comment>
<comment type="subunit">
    <text evidence="1">Part of the 50S ribosomal subunit.</text>
</comment>
<comment type="similarity">
    <text evidence="1">Belongs to the universal ribosomal protein uL6 family.</text>
</comment>
<reference key="1">
    <citation type="journal article" date="2012" name="BMC Genomics">
        <title>Comparative genomics and transcriptomics of lineages I, II, and III strains of Listeria monocytogenes.</title>
        <authorList>
            <person name="Hain T."/>
            <person name="Ghai R."/>
            <person name="Billion A."/>
            <person name="Kuenne C.T."/>
            <person name="Steinweg C."/>
            <person name="Izar B."/>
            <person name="Mohamed W."/>
            <person name="Mraheil M."/>
            <person name="Domann E."/>
            <person name="Schaffrath S."/>
            <person name="Karst U."/>
            <person name="Goesmann A."/>
            <person name="Oehm S."/>
            <person name="Puhler A."/>
            <person name="Merkl R."/>
            <person name="Vorwerk S."/>
            <person name="Glaser P."/>
            <person name="Garrido P."/>
            <person name="Rusniok C."/>
            <person name="Buchrieser C."/>
            <person name="Goebel W."/>
            <person name="Chakraborty T."/>
        </authorList>
    </citation>
    <scope>NUCLEOTIDE SEQUENCE [LARGE SCALE GENOMIC DNA]</scope>
    <source>
        <strain>CLIP80459</strain>
    </source>
</reference>
<accession>C1KZG5</accession>